<sequence>MADQAQDVRPTEWGPGKTPQGRARLPSSRPREKPQLSCNLCRRRKLRCDRQRPCSSCAQRELGLSCTYASDRVLSNGVAHQTRTTTQDRIRHLESLVYDLMQNSSANVNAQDQVGATPSPRGQPRGPDYPTPAAVHAPSTNEEPVSAAVSPADYGSMQSTGGGANYVGSAHWAAVLDGIAELKDHLDNEESHHSDSQGVDPPCPQVTGPQLLYGCPKPADKDEILSSIPARSVVDRLVSRYFNSFEMSPAVLHSVQFLKEYEAFWEDPQTTSPIWLGLLFTIMCLATQFEKSRLDPGVQSPAVLSMERELQEMVDTFRLRIPQCLVLGSYAKGGPFVLETLMLYIAAEIFLSSDAEIEIWILMGNTVQLALHMGYHRDPKHFKGLSPFAAEMRRRIWATIVEMDLGLSAQMGLPRMVKHWQTDTQEPSNLQDSDFDSATVEMPPSRLNTDLTPILYRLVKARLMTTIGYIWDFSADVRPYPYTEVQKMDDKLDLARKSIPECLKWHSMARNITDSPQHIMQKVILETVFYRAKIVLHRKYMFLPLAQSASSRRIVLESALKLLDYQHMLQEETQPFCQLYQERWRVSSLVNHDFLLATSILCYYLQHAWGATQRVSESDSFDETIMASLRRSHDIWLQSSNSSKEARKVVRALAVVLGRVNTPSADSVGEAGLVFGLPSTYPPSTTNDYSQETPGGLGSQFPMFNSALMPNWATFADDLISAPMITPTAEWQEMDETVDAMGSLNWPWNLQ</sequence>
<protein>
    <recommendedName>
        <fullName evidence="4">Fusarisetin A cluster transcription factor fsa6</fullName>
    </recommendedName>
    <alternativeName>
        <fullName evidence="4">Fusarisetin A biosynthesis protein 6</fullName>
    </alternativeName>
</protein>
<accession>A0A0E4AZF8</accession>
<keyword id="KW-0238">DNA-binding</keyword>
<keyword id="KW-0479">Metal-binding</keyword>
<keyword id="KW-0539">Nucleus</keyword>
<keyword id="KW-0862">Zinc</keyword>
<reference key="1">
    <citation type="journal article" date="2015" name="Biochem. Biophys. Res. Commun.">
        <title>A new enzyme involved in the control of the stereochemistry in the decalin formation during equisetin biosynthesis.</title>
        <authorList>
            <person name="Kato N."/>
            <person name="Nogawa T."/>
            <person name="Hirota H."/>
            <person name="Jang J.H."/>
            <person name="Takahashi S."/>
            <person name="Ahn J.S."/>
            <person name="Osada H."/>
        </authorList>
    </citation>
    <scope>NUCLEOTIDE SEQUENCE [GENOMIC DNA]</scope>
    <scope>FUNCTION</scope>
    <scope>DISRUPTION PHENOTYPE</scope>
</reference>
<evidence type="ECO:0000255" key="1">
    <source>
        <dbReference type="PROSITE-ProRule" id="PRU00227"/>
    </source>
</evidence>
<evidence type="ECO:0000256" key="2">
    <source>
        <dbReference type="SAM" id="MobiDB-lite"/>
    </source>
</evidence>
<evidence type="ECO:0000269" key="3">
    <source>
    </source>
</evidence>
<evidence type="ECO:0000303" key="4">
    <source>
    </source>
</evidence>
<evidence type="ECO:0000305" key="5"/>
<evidence type="ECO:0000305" key="6">
    <source>
    </source>
</evidence>
<dbReference type="EMBL" id="LC025956">
    <property type="protein sequence ID" value="BAR40288.1"/>
    <property type="molecule type" value="Genomic_DNA"/>
</dbReference>
<dbReference type="GO" id="GO:0005634">
    <property type="term" value="C:nucleus"/>
    <property type="evidence" value="ECO:0007669"/>
    <property type="project" value="UniProtKB-SubCell"/>
</dbReference>
<dbReference type="GO" id="GO:0003677">
    <property type="term" value="F:DNA binding"/>
    <property type="evidence" value="ECO:0007669"/>
    <property type="project" value="UniProtKB-KW"/>
</dbReference>
<dbReference type="GO" id="GO:0000981">
    <property type="term" value="F:DNA-binding transcription factor activity, RNA polymerase II-specific"/>
    <property type="evidence" value="ECO:0007669"/>
    <property type="project" value="InterPro"/>
</dbReference>
<dbReference type="GO" id="GO:0008270">
    <property type="term" value="F:zinc ion binding"/>
    <property type="evidence" value="ECO:0007669"/>
    <property type="project" value="InterPro"/>
</dbReference>
<dbReference type="GO" id="GO:0006351">
    <property type="term" value="P:DNA-templated transcription"/>
    <property type="evidence" value="ECO:0007669"/>
    <property type="project" value="InterPro"/>
</dbReference>
<dbReference type="CDD" id="cd12148">
    <property type="entry name" value="fungal_TF_MHR"/>
    <property type="match status" value="1"/>
</dbReference>
<dbReference type="CDD" id="cd00067">
    <property type="entry name" value="GAL4"/>
    <property type="match status" value="1"/>
</dbReference>
<dbReference type="Gene3D" id="4.10.240.10">
    <property type="entry name" value="Zn(2)-C6 fungal-type DNA-binding domain"/>
    <property type="match status" value="1"/>
</dbReference>
<dbReference type="InterPro" id="IPR050613">
    <property type="entry name" value="Sec_Metabolite_Reg"/>
</dbReference>
<dbReference type="InterPro" id="IPR007219">
    <property type="entry name" value="Transcription_factor_dom_fun"/>
</dbReference>
<dbReference type="InterPro" id="IPR036864">
    <property type="entry name" value="Zn2-C6_fun-type_DNA-bd_sf"/>
</dbReference>
<dbReference type="InterPro" id="IPR001138">
    <property type="entry name" value="Zn2Cys6_DnaBD"/>
</dbReference>
<dbReference type="PANTHER" id="PTHR31001">
    <property type="entry name" value="UNCHARACTERIZED TRANSCRIPTIONAL REGULATORY PROTEIN"/>
    <property type="match status" value="1"/>
</dbReference>
<dbReference type="PANTHER" id="PTHR31001:SF74">
    <property type="entry name" value="ZN(II)2CYS6 TRANSCRIPTION FACTOR (EUROFUNG)"/>
    <property type="match status" value="1"/>
</dbReference>
<dbReference type="Pfam" id="PF04082">
    <property type="entry name" value="Fungal_trans"/>
    <property type="match status" value="1"/>
</dbReference>
<dbReference type="Pfam" id="PF00172">
    <property type="entry name" value="Zn_clus"/>
    <property type="match status" value="1"/>
</dbReference>
<dbReference type="SMART" id="SM00906">
    <property type="entry name" value="Fungal_trans"/>
    <property type="match status" value="1"/>
</dbReference>
<dbReference type="SMART" id="SM00066">
    <property type="entry name" value="GAL4"/>
    <property type="match status" value="1"/>
</dbReference>
<dbReference type="SUPFAM" id="SSF57701">
    <property type="entry name" value="Zn2/Cys6 DNA-binding domain"/>
    <property type="match status" value="1"/>
</dbReference>
<dbReference type="PROSITE" id="PS00463">
    <property type="entry name" value="ZN2_CY6_FUNGAL_1"/>
    <property type="match status" value="1"/>
</dbReference>
<dbReference type="PROSITE" id="PS50048">
    <property type="entry name" value="ZN2_CY6_FUNGAL_2"/>
    <property type="match status" value="1"/>
</dbReference>
<comment type="function">
    <text evidence="6">Transcription factor that regulates the expression of the gene cluster that mediates the biosynthesis of fusarisetin A (PubMed:25770422).</text>
</comment>
<comment type="subcellular location">
    <subcellularLocation>
        <location evidence="5">Nucleus</location>
    </subcellularLocation>
</comment>
<comment type="disruption phenotype">
    <text evidence="3">Fairly reduces the production of fusarisetin A (PubMed:25770422).</text>
</comment>
<gene>
    <name evidence="4" type="primary">fsa6</name>
</gene>
<feature type="chain" id="PRO_0000441303" description="Fusarisetin A cluster transcription factor fsa6">
    <location>
        <begin position="1"/>
        <end position="751"/>
    </location>
</feature>
<feature type="DNA-binding region" description="Zn(2)-C6 fungal-type" evidence="1">
    <location>
        <begin position="38"/>
        <end position="66"/>
    </location>
</feature>
<feature type="region of interest" description="Disordered" evidence="2">
    <location>
        <begin position="1"/>
        <end position="35"/>
    </location>
</feature>
<feature type="region of interest" description="Disordered" evidence="2">
    <location>
        <begin position="107"/>
        <end position="153"/>
    </location>
</feature>
<feature type="compositionally biased region" description="Polar residues" evidence="2">
    <location>
        <begin position="107"/>
        <end position="116"/>
    </location>
</feature>
<organism>
    <name type="scientific">Fusarium sp. (strain FN080326)</name>
    <dbReference type="NCBI Taxonomy" id="1608308"/>
    <lineage>
        <taxon>Eukaryota</taxon>
        <taxon>Fungi</taxon>
        <taxon>Dikarya</taxon>
        <taxon>Ascomycota</taxon>
        <taxon>Pezizomycotina</taxon>
        <taxon>Sordariomycetes</taxon>
        <taxon>Hypocreomycetidae</taxon>
        <taxon>Hypocreales</taxon>
        <taxon>Nectriaceae</taxon>
        <taxon>Fusarium</taxon>
    </lineage>
</organism>
<proteinExistence type="predicted"/>
<name>FSA6_FUSSF</name>